<proteinExistence type="inferred from homology"/>
<comment type="catalytic activity">
    <reaction evidence="1">
        <text>tRNA(Arg) + L-arginine + ATP = L-arginyl-tRNA(Arg) + AMP + diphosphate</text>
        <dbReference type="Rhea" id="RHEA:20301"/>
        <dbReference type="Rhea" id="RHEA-COMP:9658"/>
        <dbReference type="Rhea" id="RHEA-COMP:9673"/>
        <dbReference type="ChEBI" id="CHEBI:30616"/>
        <dbReference type="ChEBI" id="CHEBI:32682"/>
        <dbReference type="ChEBI" id="CHEBI:33019"/>
        <dbReference type="ChEBI" id="CHEBI:78442"/>
        <dbReference type="ChEBI" id="CHEBI:78513"/>
        <dbReference type="ChEBI" id="CHEBI:456215"/>
        <dbReference type="EC" id="6.1.1.19"/>
    </reaction>
</comment>
<comment type="subunit">
    <text evidence="1">Monomer.</text>
</comment>
<comment type="subcellular location">
    <subcellularLocation>
        <location evidence="1">Cytoplasm</location>
    </subcellularLocation>
</comment>
<comment type="similarity">
    <text evidence="1">Belongs to the class-I aminoacyl-tRNA synthetase family.</text>
</comment>
<sequence length="577" mass="64789">MNIQSILSDKIKQAMVIAGADQSCDALVRQSGKPQFGDYQANGIMAAAKKLGLNPREFAQKVLDNLQLSDIAEKLEIAGPGFINIFLNPTWLTTEISAALSHKNLGIQATNKQTVVIDYSSPNVAKEMHVGHLRSTIIGDAVARTLEFLGHNVIRANHVGDWGTQFGMLIAYLEKMQNEHASEMELQDLEAFYREAKKHYDEDEIFAEKARNYVVKLQSGDEYCRTMWKRLVDITMQQNQHNYNRLNVTLTEKDVMGESLYNPMLPSIVEDLKKQGLAVENDGALVVYLDEFKNKDGDPMGVIVQKKDGGFLYTTTDIAAAKYRYETLKANRALVFSDTRQSQHMQQAWLITRKAGYVPDSFSLEHKNFGMMLGKDGKPFKTRTGGTVKLADLLNEAIERATVLINEKNTNLSNDEKQAVIEAIGIGSVKYADLSKNRTTDYVFDWDNMLSFEGNTAPYMQYAYTRIRSIFNKTDINSTALLAAPLTIKDDKERTLAIKLLQFEEAVQTVGKEGTPHVLCAYLYELAGIFSSFYEHCPILNAENESIKLSRLKLALLTEKTLKQGLTLLGIKTVEKM</sequence>
<accession>Q4QL12</accession>
<reference key="1">
    <citation type="journal article" date="2005" name="J. Bacteriol.">
        <title>Genomic sequence of an otitis media isolate of nontypeable Haemophilus influenzae: comparative study with H. influenzae serotype d, strain KW20.</title>
        <authorList>
            <person name="Harrison A."/>
            <person name="Dyer D.W."/>
            <person name="Gillaspy A."/>
            <person name="Ray W.C."/>
            <person name="Mungur R."/>
            <person name="Carson M.B."/>
            <person name="Zhong H."/>
            <person name="Gipson J."/>
            <person name="Gipson M."/>
            <person name="Johnson L.S."/>
            <person name="Lewis L."/>
            <person name="Bakaletz L.O."/>
            <person name="Munson R.S. Jr."/>
        </authorList>
    </citation>
    <scope>NUCLEOTIDE SEQUENCE [LARGE SCALE GENOMIC DNA]</scope>
    <source>
        <strain>86-028NP</strain>
    </source>
</reference>
<keyword id="KW-0030">Aminoacyl-tRNA synthetase</keyword>
<keyword id="KW-0067">ATP-binding</keyword>
<keyword id="KW-0963">Cytoplasm</keyword>
<keyword id="KW-0436">Ligase</keyword>
<keyword id="KW-0547">Nucleotide-binding</keyword>
<keyword id="KW-0648">Protein biosynthesis</keyword>
<feature type="chain" id="PRO_0000242029" description="Arginine--tRNA ligase">
    <location>
        <begin position="1"/>
        <end position="577"/>
    </location>
</feature>
<feature type="short sequence motif" description="'HIGH' region">
    <location>
        <begin position="122"/>
        <end position="132"/>
    </location>
</feature>
<organism>
    <name type="scientific">Haemophilus influenzae (strain 86-028NP)</name>
    <dbReference type="NCBI Taxonomy" id="281310"/>
    <lineage>
        <taxon>Bacteria</taxon>
        <taxon>Pseudomonadati</taxon>
        <taxon>Pseudomonadota</taxon>
        <taxon>Gammaproteobacteria</taxon>
        <taxon>Pasteurellales</taxon>
        <taxon>Pasteurellaceae</taxon>
        <taxon>Haemophilus</taxon>
    </lineage>
</organism>
<evidence type="ECO:0000255" key="1">
    <source>
        <dbReference type="HAMAP-Rule" id="MF_00123"/>
    </source>
</evidence>
<protein>
    <recommendedName>
        <fullName evidence="1">Arginine--tRNA ligase</fullName>
        <ecNumber evidence="1">6.1.1.19</ecNumber>
    </recommendedName>
    <alternativeName>
        <fullName evidence="1">Arginyl-tRNA synthetase</fullName>
        <shortName evidence="1">ArgRS</shortName>
    </alternativeName>
</protein>
<dbReference type="EC" id="6.1.1.19" evidence="1"/>
<dbReference type="EMBL" id="CP000057">
    <property type="protein sequence ID" value="AAX88285.1"/>
    <property type="molecule type" value="Genomic_DNA"/>
</dbReference>
<dbReference type="RefSeq" id="WP_011272480.1">
    <property type="nucleotide sequence ID" value="NC_007146.2"/>
</dbReference>
<dbReference type="SMR" id="Q4QL12"/>
<dbReference type="KEGG" id="hit:NTHI1470"/>
<dbReference type="HOGENOM" id="CLU_006406_5_1_6"/>
<dbReference type="Proteomes" id="UP000002525">
    <property type="component" value="Chromosome"/>
</dbReference>
<dbReference type="GO" id="GO:0005737">
    <property type="term" value="C:cytoplasm"/>
    <property type="evidence" value="ECO:0007669"/>
    <property type="project" value="UniProtKB-SubCell"/>
</dbReference>
<dbReference type="GO" id="GO:0004814">
    <property type="term" value="F:arginine-tRNA ligase activity"/>
    <property type="evidence" value="ECO:0007669"/>
    <property type="project" value="UniProtKB-UniRule"/>
</dbReference>
<dbReference type="GO" id="GO:0005524">
    <property type="term" value="F:ATP binding"/>
    <property type="evidence" value="ECO:0007669"/>
    <property type="project" value="UniProtKB-UniRule"/>
</dbReference>
<dbReference type="GO" id="GO:0006420">
    <property type="term" value="P:arginyl-tRNA aminoacylation"/>
    <property type="evidence" value="ECO:0007669"/>
    <property type="project" value="UniProtKB-UniRule"/>
</dbReference>
<dbReference type="CDD" id="cd07956">
    <property type="entry name" value="Anticodon_Ia_Arg"/>
    <property type="match status" value="1"/>
</dbReference>
<dbReference type="CDD" id="cd00671">
    <property type="entry name" value="ArgRS_core"/>
    <property type="match status" value="1"/>
</dbReference>
<dbReference type="FunFam" id="1.10.730.10:FF:000001">
    <property type="entry name" value="Arginine--tRNA ligase"/>
    <property type="match status" value="1"/>
</dbReference>
<dbReference type="FunFam" id="3.30.1360.70:FF:000001">
    <property type="entry name" value="Arginine--tRNA ligase"/>
    <property type="match status" value="1"/>
</dbReference>
<dbReference type="FunFam" id="3.40.50.620:FF:000030">
    <property type="entry name" value="Arginine--tRNA ligase"/>
    <property type="match status" value="1"/>
</dbReference>
<dbReference type="Gene3D" id="3.30.1360.70">
    <property type="entry name" value="Arginyl tRNA synthetase N-terminal domain"/>
    <property type="match status" value="1"/>
</dbReference>
<dbReference type="Gene3D" id="3.40.50.620">
    <property type="entry name" value="HUPs"/>
    <property type="match status" value="1"/>
</dbReference>
<dbReference type="Gene3D" id="1.10.730.10">
    <property type="entry name" value="Isoleucyl-tRNA Synthetase, Domain 1"/>
    <property type="match status" value="1"/>
</dbReference>
<dbReference type="HAMAP" id="MF_00123">
    <property type="entry name" value="Arg_tRNA_synth"/>
    <property type="match status" value="1"/>
</dbReference>
<dbReference type="InterPro" id="IPR001412">
    <property type="entry name" value="aa-tRNA-synth_I_CS"/>
</dbReference>
<dbReference type="InterPro" id="IPR001278">
    <property type="entry name" value="Arg-tRNA-ligase"/>
</dbReference>
<dbReference type="InterPro" id="IPR005148">
    <property type="entry name" value="Arg-tRNA-synth_N"/>
</dbReference>
<dbReference type="InterPro" id="IPR036695">
    <property type="entry name" value="Arg-tRNA-synth_N_sf"/>
</dbReference>
<dbReference type="InterPro" id="IPR035684">
    <property type="entry name" value="ArgRS_core"/>
</dbReference>
<dbReference type="InterPro" id="IPR008909">
    <property type="entry name" value="DALR_anticod-bd"/>
</dbReference>
<dbReference type="InterPro" id="IPR014729">
    <property type="entry name" value="Rossmann-like_a/b/a_fold"/>
</dbReference>
<dbReference type="InterPro" id="IPR009080">
    <property type="entry name" value="tRNAsynth_Ia_anticodon-bd"/>
</dbReference>
<dbReference type="NCBIfam" id="TIGR00456">
    <property type="entry name" value="argS"/>
    <property type="match status" value="1"/>
</dbReference>
<dbReference type="PANTHER" id="PTHR11956:SF5">
    <property type="entry name" value="ARGININE--TRNA LIGASE, CYTOPLASMIC"/>
    <property type="match status" value="1"/>
</dbReference>
<dbReference type="PANTHER" id="PTHR11956">
    <property type="entry name" value="ARGINYL-TRNA SYNTHETASE"/>
    <property type="match status" value="1"/>
</dbReference>
<dbReference type="Pfam" id="PF03485">
    <property type="entry name" value="Arg_tRNA_synt_N"/>
    <property type="match status" value="1"/>
</dbReference>
<dbReference type="Pfam" id="PF05746">
    <property type="entry name" value="DALR_1"/>
    <property type="match status" value="1"/>
</dbReference>
<dbReference type="Pfam" id="PF00750">
    <property type="entry name" value="tRNA-synt_1d"/>
    <property type="match status" value="1"/>
</dbReference>
<dbReference type="PRINTS" id="PR01038">
    <property type="entry name" value="TRNASYNTHARG"/>
</dbReference>
<dbReference type="SMART" id="SM01016">
    <property type="entry name" value="Arg_tRNA_synt_N"/>
    <property type="match status" value="1"/>
</dbReference>
<dbReference type="SMART" id="SM00836">
    <property type="entry name" value="DALR_1"/>
    <property type="match status" value="1"/>
</dbReference>
<dbReference type="SUPFAM" id="SSF47323">
    <property type="entry name" value="Anticodon-binding domain of a subclass of class I aminoacyl-tRNA synthetases"/>
    <property type="match status" value="1"/>
</dbReference>
<dbReference type="SUPFAM" id="SSF55190">
    <property type="entry name" value="Arginyl-tRNA synthetase (ArgRS), N-terminal 'additional' domain"/>
    <property type="match status" value="1"/>
</dbReference>
<dbReference type="SUPFAM" id="SSF52374">
    <property type="entry name" value="Nucleotidylyl transferase"/>
    <property type="match status" value="1"/>
</dbReference>
<dbReference type="PROSITE" id="PS00178">
    <property type="entry name" value="AA_TRNA_LIGASE_I"/>
    <property type="match status" value="1"/>
</dbReference>
<gene>
    <name evidence="1" type="primary">argS</name>
    <name type="ordered locus">NTHI1470</name>
</gene>
<name>SYR_HAEI8</name>